<gene>
    <name evidence="1" type="primary">cobQ</name>
    <name type="ordered locus">MA_3250</name>
</gene>
<protein>
    <recommendedName>
        <fullName evidence="1">Probable cobyric acid synthase</fullName>
    </recommendedName>
</protein>
<comment type="function">
    <text evidence="1">Catalyzes amidations at positions B, D, E, and G on adenosylcobyrinic A,C-diamide. NH(2) groups are provided by glutamine, and one molecule of ATP is hydrogenolyzed for each amidation.</text>
</comment>
<comment type="pathway">
    <text evidence="1">Cofactor biosynthesis; adenosylcobalamin biosynthesis.</text>
</comment>
<comment type="similarity">
    <text evidence="1">Belongs to the CobB/CobQ family. CobQ subfamily.</text>
</comment>
<evidence type="ECO:0000255" key="1">
    <source>
        <dbReference type="HAMAP-Rule" id="MF_00028"/>
    </source>
</evidence>
<proteinExistence type="inferred from homology"/>
<name>COBQ_METAC</name>
<feature type="chain" id="PRO_0000141347" description="Probable cobyric acid synthase">
    <location>
        <begin position="1"/>
        <end position="485"/>
    </location>
</feature>
<feature type="domain" description="GATase cobBQ-type" evidence="1">
    <location>
        <begin position="250"/>
        <end position="435"/>
    </location>
</feature>
<feature type="active site" description="Nucleophile" evidence="1">
    <location>
        <position position="328"/>
    </location>
</feature>
<feature type="active site" evidence="1">
    <location>
        <position position="427"/>
    </location>
</feature>
<accession>Q8TKZ3</accession>
<dbReference type="EMBL" id="AE010299">
    <property type="protein sequence ID" value="AAM06621.1"/>
    <property type="molecule type" value="Genomic_DNA"/>
</dbReference>
<dbReference type="RefSeq" id="WP_011023184.1">
    <property type="nucleotide sequence ID" value="NC_003552.1"/>
</dbReference>
<dbReference type="SMR" id="Q8TKZ3"/>
<dbReference type="FunCoup" id="Q8TKZ3">
    <property type="interactions" value="94"/>
</dbReference>
<dbReference type="STRING" id="188937.MA_3250"/>
<dbReference type="EnsemblBacteria" id="AAM06621">
    <property type="protein sequence ID" value="AAM06621"/>
    <property type="gene ID" value="MA_3250"/>
</dbReference>
<dbReference type="GeneID" id="1475143"/>
<dbReference type="KEGG" id="mac:MA_3250"/>
<dbReference type="HOGENOM" id="CLU_019250_2_2_2"/>
<dbReference type="InParanoid" id="Q8TKZ3"/>
<dbReference type="OrthoDB" id="53136at2157"/>
<dbReference type="PhylomeDB" id="Q8TKZ3"/>
<dbReference type="UniPathway" id="UPA00148"/>
<dbReference type="Proteomes" id="UP000002487">
    <property type="component" value="Chromosome"/>
</dbReference>
<dbReference type="GO" id="GO:0015420">
    <property type="term" value="F:ABC-type vitamin B12 transporter activity"/>
    <property type="evidence" value="ECO:0007669"/>
    <property type="project" value="UniProtKB-UniRule"/>
</dbReference>
<dbReference type="GO" id="GO:0003824">
    <property type="term" value="F:catalytic activity"/>
    <property type="evidence" value="ECO:0007669"/>
    <property type="project" value="InterPro"/>
</dbReference>
<dbReference type="GO" id="GO:0009236">
    <property type="term" value="P:cobalamin biosynthetic process"/>
    <property type="evidence" value="ECO:0007669"/>
    <property type="project" value="UniProtKB-UniRule"/>
</dbReference>
<dbReference type="CDD" id="cd05389">
    <property type="entry name" value="CobQ_N"/>
    <property type="match status" value="1"/>
</dbReference>
<dbReference type="CDD" id="cd01750">
    <property type="entry name" value="GATase1_CobQ"/>
    <property type="match status" value="1"/>
</dbReference>
<dbReference type="Gene3D" id="3.40.50.880">
    <property type="match status" value="1"/>
</dbReference>
<dbReference type="Gene3D" id="3.40.50.300">
    <property type="entry name" value="P-loop containing nucleotide triphosphate hydrolases"/>
    <property type="match status" value="1"/>
</dbReference>
<dbReference type="HAMAP" id="MF_00028">
    <property type="entry name" value="CobQ"/>
    <property type="match status" value="1"/>
</dbReference>
<dbReference type="InterPro" id="IPR029062">
    <property type="entry name" value="Class_I_gatase-like"/>
</dbReference>
<dbReference type="InterPro" id="IPR002586">
    <property type="entry name" value="CobQ/CobB/MinD/ParA_Nub-bd_dom"/>
</dbReference>
<dbReference type="InterPro" id="IPR033949">
    <property type="entry name" value="CobQ_GATase1"/>
</dbReference>
<dbReference type="InterPro" id="IPR047045">
    <property type="entry name" value="CobQ_N"/>
</dbReference>
<dbReference type="InterPro" id="IPR004459">
    <property type="entry name" value="CobQ_synth"/>
</dbReference>
<dbReference type="InterPro" id="IPR011698">
    <property type="entry name" value="GATase_3"/>
</dbReference>
<dbReference type="InterPro" id="IPR027417">
    <property type="entry name" value="P-loop_NTPase"/>
</dbReference>
<dbReference type="NCBIfam" id="TIGR00313">
    <property type="entry name" value="cobQ"/>
    <property type="match status" value="1"/>
</dbReference>
<dbReference type="NCBIfam" id="NF001989">
    <property type="entry name" value="PRK00784.1"/>
    <property type="match status" value="1"/>
</dbReference>
<dbReference type="PANTHER" id="PTHR21343:SF1">
    <property type="entry name" value="COBYRIC ACID SYNTHASE"/>
    <property type="match status" value="1"/>
</dbReference>
<dbReference type="PANTHER" id="PTHR21343">
    <property type="entry name" value="DETHIOBIOTIN SYNTHETASE"/>
    <property type="match status" value="1"/>
</dbReference>
<dbReference type="Pfam" id="PF01656">
    <property type="entry name" value="CbiA"/>
    <property type="match status" value="1"/>
</dbReference>
<dbReference type="Pfam" id="PF07685">
    <property type="entry name" value="GATase_3"/>
    <property type="match status" value="1"/>
</dbReference>
<dbReference type="SUPFAM" id="SSF52317">
    <property type="entry name" value="Class I glutamine amidotransferase-like"/>
    <property type="match status" value="1"/>
</dbReference>
<dbReference type="SUPFAM" id="SSF52540">
    <property type="entry name" value="P-loop containing nucleoside triphosphate hydrolases"/>
    <property type="match status" value="1"/>
</dbReference>
<dbReference type="PROSITE" id="PS51274">
    <property type="entry name" value="GATASE_COBBQ"/>
    <property type="match status" value="1"/>
</dbReference>
<keyword id="KW-0169">Cobalamin biosynthesis</keyword>
<keyword id="KW-0315">Glutamine amidotransferase</keyword>
<keyword id="KW-1185">Reference proteome</keyword>
<sequence length="485" mass="53337">MEKKSLLILGTASHVGKSSVVTAICRILSRNYRVAPFKAQNMSLNSWITKDGKEIGIAQAIQAKAAGTEPTADMNPVLLKPKGDCVSQVILLGEPYADKSAGQYYDSIEEMNGVLEGALERLWKEHDIIVMEGAGGAAEINLYERDVVNVGTARLTQAPIILVGDIERGGVFASLYGTVALLPEDVKKNVKGFIINKFRGDPEILKPGLKQLEEITGIPVLGVLPHFKLRIPSEDSVSLGDKEGAKNEKEVEIAVIRLPRISNFTDFEPLEGLVKVHYVDIDEDLGNPDAIMIPGTKNTINDLLDLRASGMDKKIQAFKGKIPIFGICGGYQMLGRTIFDSGVENGVEAEFEGLRLLDIGTKFGEYKKRTIQVTKKVNGYGPILKSIDGEDIKGYEIHMGVTDSNRTVFGDDGAIDEEGLVIGTYLHGLFDNENIRNALVRYLCEKKGLEYRPEEIISENDAYEELANRFEQNIDMEKLYEIAGI</sequence>
<organism>
    <name type="scientific">Methanosarcina acetivorans (strain ATCC 35395 / DSM 2834 / JCM 12185 / C2A)</name>
    <dbReference type="NCBI Taxonomy" id="188937"/>
    <lineage>
        <taxon>Archaea</taxon>
        <taxon>Methanobacteriati</taxon>
        <taxon>Methanobacteriota</taxon>
        <taxon>Stenosarchaea group</taxon>
        <taxon>Methanomicrobia</taxon>
        <taxon>Methanosarcinales</taxon>
        <taxon>Methanosarcinaceae</taxon>
        <taxon>Methanosarcina</taxon>
    </lineage>
</organism>
<reference key="1">
    <citation type="journal article" date="2002" name="Genome Res.">
        <title>The genome of Methanosarcina acetivorans reveals extensive metabolic and physiological diversity.</title>
        <authorList>
            <person name="Galagan J.E."/>
            <person name="Nusbaum C."/>
            <person name="Roy A."/>
            <person name="Endrizzi M.G."/>
            <person name="Macdonald P."/>
            <person name="FitzHugh W."/>
            <person name="Calvo S."/>
            <person name="Engels R."/>
            <person name="Smirnov S."/>
            <person name="Atnoor D."/>
            <person name="Brown A."/>
            <person name="Allen N."/>
            <person name="Naylor J."/>
            <person name="Stange-Thomann N."/>
            <person name="DeArellano K."/>
            <person name="Johnson R."/>
            <person name="Linton L."/>
            <person name="McEwan P."/>
            <person name="McKernan K."/>
            <person name="Talamas J."/>
            <person name="Tirrell A."/>
            <person name="Ye W."/>
            <person name="Zimmer A."/>
            <person name="Barber R.D."/>
            <person name="Cann I."/>
            <person name="Graham D.E."/>
            <person name="Grahame D.A."/>
            <person name="Guss A.M."/>
            <person name="Hedderich R."/>
            <person name="Ingram-Smith C."/>
            <person name="Kuettner H.C."/>
            <person name="Krzycki J.A."/>
            <person name="Leigh J.A."/>
            <person name="Li W."/>
            <person name="Liu J."/>
            <person name="Mukhopadhyay B."/>
            <person name="Reeve J.N."/>
            <person name="Smith K."/>
            <person name="Springer T.A."/>
            <person name="Umayam L.A."/>
            <person name="White O."/>
            <person name="White R.H."/>
            <person name="de Macario E.C."/>
            <person name="Ferry J.G."/>
            <person name="Jarrell K.F."/>
            <person name="Jing H."/>
            <person name="Macario A.J.L."/>
            <person name="Paulsen I.T."/>
            <person name="Pritchett M."/>
            <person name="Sowers K.R."/>
            <person name="Swanson R.V."/>
            <person name="Zinder S.H."/>
            <person name="Lander E."/>
            <person name="Metcalf W.W."/>
            <person name="Birren B."/>
        </authorList>
    </citation>
    <scope>NUCLEOTIDE SEQUENCE [LARGE SCALE GENOMIC DNA]</scope>
    <source>
        <strain>ATCC 35395 / DSM 2834 / JCM 12185 / C2A</strain>
    </source>
</reference>